<feature type="chain" id="PRO_0000046110" description="Potassium-transporting ATPase ATP-binding subunit 1">
    <location>
        <begin position="1"/>
        <end position="701"/>
    </location>
</feature>
<feature type="transmembrane region" description="Helical" evidence="1">
    <location>
        <begin position="57"/>
        <end position="77"/>
    </location>
</feature>
<feature type="transmembrane region" description="Helical" evidence="1">
    <location>
        <begin position="90"/>
        <end position="110"/>
    </location>
</feature>
<feature type="transmembrane region" description="Helical" evidence="1">
    <location>
        <begin position="241"/>
        <end position="261"/>
    </location>
</feature>
<feature type="transmembrane region" description="Helical" evidence="1">
    <location>
        <begin position="278"/>
        <end position="298"/>
    </location>
</feature>
<feature type="transmembrane region" description="Helical" evidence="1">
    <location>
        <begin position="599"/>
        <end position="619"/>
    </location>
</feature>
<feature type="transmembrane region" description="Helical" evidence="1">
    <location>
        <begin position="635"/>
        <end position="655"/>
    </location>
</feature>
<feature type="transmembrane region" description="Helical" evidence="1">
    <location>
        <begin position="681"/>
        <end position="701"/>
    </location>
</feature>
<feature type="region of interest" description="Disordered" evidence="2">
    <location>
        <begin position="1"/>
        <end position="26"/>
    </location>
</feature>
<feature type="active site" description="4-aspartylphosphate intermediate" evidence="1">
    <location>
        <position position="329"/>
    </location>
</feature>
<feature type="binding site" evidence="1">
    <location>
        <position position="366"/>
    </location>
    <ligand>
        <name>ATP</name>
        <dbReference type="ChEBI" id="CHEBI:30616"/>
    </ligand>
</feature>
<feature type="binding site" evidence="1">
    <location>
        <position position="370"/>
    </location>
    <ligand>
        <name>ATP</name>
        <dbReference type="ChEBI" id="CHEBI:30616"/>
    </ligand>
</feature>
<feature type="binding site" evidence="1">
    <location>
        <begin position="397"/>
        <end position="404"/>
    </location>
    <ligand>
        <name>ATP</name>
        <dbReference type="ChEBI" id="CHEBI:30616"/>
    </ligand>
</feature>
<feature type="binding site" evidence="1">
    <location>
        <position position="416"/>
    </location>
    <ligand>
        <name>ATP</name>
        <dbReference type="ChEBI" id="CHEBI:30616"/>
    </ligand>
</feature>
<feature type="binding site" evidence="1">
    <location>
        <position position="539"/>
    </location>
    <ligand>
        <name>Mg(2+)</name>
        <dbReference type="ChEBI" id="CHEBI:18420"/>
    </ligand>
</feature>
<feature type="binding site" evidence="1">
    <location>
        <position position="543"/>
    </location>
    <ligand>
        <name>Mg(2+)</name>
        <dbReference type="ChEBI" id="CHEBI:18420"/>
    </ligand>
</feature>
<comment type="function">
    <text evidence="1">Part of the high-affinity ATP-driven potassium transport (or Kdp) system, which catalyzes the hydrolysis of ATP coupled with the electrogenic transport of potassium into the cytoplasm. This subunit is responsible for energy coupling to the transport system and for the release of the potassium ions to the cytoplasm.</text>
</comment>
<comment type="catalytic activity">
    <reaction evidence="1">
        <text>K(+)(out) + ATP + H2O = K(+)(in) + ADP + phosphate + H(+)</text>
        <dbReference type="Rhea" id="RHEA:16777"/>
        <dbReference type="ChEBI" id="CHEBI:15377"/>
        <dbReference type="ChEBI" id="CHEBI:15378"/>
        <dbReference type="ChEBI" id="CHEBI:29103"/>
        <dbReference type="ChEBI" id="CHEBI:30616"/>
        <dbReference type="ChEBI" id="CHEBI:43474"/>
        <dbReference type="ChEBI" id="CHEBI:456216"/>
        <dbReference type="EC" id="7.2.2.6"/>
    </reaction>
    <physiologicalReaction direction="left-to-right" evidence="1">
        <dbReference type="Rhea" id="RHEA:16778"/>
    </physiologicalReaction>
</comment>
<comment type="subunit">
    <text evidence="1">The system is composed of three essential subunits: KdpA, KdpB and KdpC.</text>
</comment>
<comment type="subcellular location">
    <subcellularLocation>
        <location evidence="1">Cell inner membrane</location>
        <topology evidence="1">Multi-pass membrane protein</topology>
    </subcellularLocation>
</comment>
<comment type="similarity">
    <text evidence="1">Belongs to the cation transport ATPase (P-type) (TC 3.A.3) family. Type IA subfamily.</text>
</comment>
<evidence type="ECO:0000255" key="1">
    <source>
        <dbReference type="HAMAP-Rule" id="MF_00285"/>
    </source>
</evidence>
<evidence type="ECO:0000256" key="2">
    <source>
        <dbReference type="SAM" id="MobiDB-lite"/>
    </source>
</evidence>
<keyword id="KW-0067">ATP-binding</keyword>
<keyword id="KW-0997">Cell inner membrane</keyword>
<keyword id="KW-1003">Cell membrane</keyword>
<keyword id="KW-0406">Ion transport</keyword>
<keyword id="KW-0460">Magnesium</keyword>
<keyword id="KW-0472">Membrane</keyword>
<keyword id="KW-0479">Metal-binding</keyword>
<keyword id="KW-0547">Nucleotide-binding</keyword>
<keyword id="KW-0597">Phosphoprotein</keyword>
<keyword id="KW-0630">Potassium</keyword>
<keyword id="KW-0633">Potassium transport</keyword>
<keyword id="KW-1185">Reference proteome</keyword>
<keyword id="KW-1278">Translocase</keyword>
<keyword id="KW-0812">Transmembrane</keyword>
<keyword id="KW-1133">Transmembrane helix</keyword>
<keyword id="KW-0813">Transport</keyword>
<gene>
    <name evidence="1" type="primary">kdpB1</name>
    <name type="ordered locus">all4245</name>
</gene>
<proteinExistence type="inferred from homology"/>
<protein>
    <recommendedName>
        <fullName evidence="1">Potassium-transporting ATPase ATP-binding subunit 1</fullName>
        <ecNumber evidence="1">7.2.2.6</ecNumber>
    </recommendedName>
    <alternativeName>
        <fullName evidence="1">ATP phosphohydrolase [potassium-transporting] B chain 1</fullName>
    </alternativeName>
    <alternativeName>
        <fullName evidence="1">Potassium-binding and translocating subunit B 1</fullName>
    </alternativeName>
    <alternativeName>
        <fullName evidence="1">Potassium-translocating ATPase B chain 1</fullName>
    </alternativeName>
</protein>
<name>KDPB1_NOSS1</name>
<reference key="1">
    <citation type="journal article" date="2001" name="DNA Res.">
        <title>Complete genomic sequence of the filamentous nitrogen-fixing cyanobacterium Anabaena sp. strain PCC 7120.</title>
        <authorList>
            <person name="Kaneko T."/>
            <person name="Nakamura Y."/>
            <person name="Wolk C.P."/>
            <person name="Kuritz T."/>
            <person name="Sasamoto S."/>
            <person name="Watanabe A."/>
            <person name="Iriguchi M."/>
            <person name="Ishikawa A."/>
            <person name="Kawashima K."/>
            <person name="Kimura T."/>
            <person name="Kishida Y."/>
            <person name="Kohara M."/>
            <person name="Matsumoto M."/>
            <person name="Matsuno A."/>
            <person name="Muraki A."/>
            <person name="Nakazaki N."/>
            <person name="Shimpo S."/>
            <person name="Sugimoto M."/>
            <person name="Takazawa M."/>
            <person name="Yamada M."/>
            <person name="Yasuda M."/>
            <person name="Tabata S."/>
        </authorList>
    </citation>
    <scope>NUCLEOTIDE SEQUENCE [LARGE SCALE GENOMIC DNA]</scope>
    <source>
        <strain>PCC 7120 / SAG 25.82 / UTEX 2576</strain>
    </source>
</reference>
<sequence>MNPVAPTRKVKPPRNRPSDRRQARKKARIKTKGIYLRAIKDAFVKLNPKSAIKNPVMFVVWVATLVTLAVTINPDLFGPNQQKNPQLFNGLLTGILFFTVWFANFAEAVAEGRGKAQADTLRSTKSEAIAKQLSPDGTIAEVPSTNLKQGDTVYVVAGDIIPADGEVIMGVASVDESAITGESAPVLKESGSDVASSVTGGTRIISDELIVRVTSDPGKGFIDRMIALVEGAERSKTPNEVALTVLLAVLSLVFLFVIATLPAFAYYADTPVNVPTLIALLVALIPTTIGGLLSAIGIAGMDRVAQFNVIATSGRAVEVCGDINTLVLDKTGTITLGNRLAEEFIPINGYSVEQLASVAWAASVFDDTPEGKSIVRLAEKLGIRYDLDPNLAQAVEFSAKTRMSGTNLPGGREARKGAVGAIQGFVRSRNGQTIPELDAAYERVSQQGGTPLAVCLDNEIYGVIYLKDIVKSGIRERFDQLRRMGVRTIMLTGDNHITASVIAQEAGVDDFIAEATPEDKISVIQREQAQGKLVAMTGDGTNDAPALAQANVGVAMNTGTQAAKEAANMVDLDSDPTKLIDIVSIGKQLLITRGALTTFSIANDIAKYFAIIPVIFAAANLQSLNIMNLTSTNSAVLSALIYNALIIPALIPLALKGVQFRPLTANQLLQRNILIYGLGGVIAPFIAIKLIDILITLVGLA</sequence>
<dbReference type="EC" id="7.2.2.6" evidence="1"/>
<dbReference type="EMBL" id="BA000019">
    <property type="protein sequence ID" value="BAB75944.1"/>
    <property type="molecule type" value="Genomic_DNA"/>
</dbReference>
<dbReference type="PIR" id="AF2336">
    <property type="entry name" value="AF2336"/>
</dbReference>
<dbReference type="SMR" id="Q8YPE9"/>
<dbReference type="STRING" id="103690.gene:10496294"/>
<dbReference type="KEGG" id="ana:all4245"/>
<dbReference type="eggNOG" id="COG2216">
    <property type="taxonomic scope" value="Bacteria"/>
</dbReference>
<dbReference type="OrthoDB" id="438550at2"/>
<dbReference type="Proteomes" id="UP000002483">
    <property type="component" value="Chromosome"/>
</dbReference>
<dbReference type="GO" id="GO:0005886">
    <property type="term" value="C:plasma membrane"/>
    <property type="evidence" value="ECO:0007669"/>
    <property type="project" value="UniProtKB-SubCell"/>
</dbReference>
<dbReference type="GO" id="GO:0005524">
    <property type="term" value="F:ATP binding"/>
    <property type="evidence" value="ECO:0007669"/>
    <property type="project" value="UniProtKB-UniRule"/>
</dbReference>
<dbReference type="GO" id="GO:0016887">
    <property type="term" value="F:ATP hydrolysis activity"/>
    <property type="evidence" value="ECO:0007669"/>
    <property type="project" value="InterPro"/>
</dbReference>
<dbReference type="GO" id="GO:0000287">
    <property type="term" value="F:magnesium ion binding"/>
    <property type="evidence" value="ECO:0007669"/>
    <property type="project" value="UniProtKB-UniRule"/>
</dbReference>
<dbReference type="GO" id="GO:0008556">
    <property type="term" value="F:P-type potassium transmembrane transporter activity"/>
    <property type="evidence" value="ECO:0007669"/>
    <property type="project" value="UniProtKB-UniRule"/>
</dbReference>
<dbReference type="CDD" id="cd02078">
    <property type="entry name" value="P-type_ATPase_K"/>
    <property type="match status" value="1"/>
</dbReference>
<dbReference type="FunFam" id="2.70.150.10:FF:000010">
    <property type="entry name" value="Potassium-transporting ATPase ATP-binding subunit"/>
    <property type="match status" value="1"/>
</dbReference>
<dbReference type="Gene3D" id="3.40.1110.10">
    <property type="entry name" value="Calcium-transporting ATPase, cytoplasmic domain N"/>
    <property type="match status" value="1"/>
</dbReference>
<dbReference type="Gene3D" id="2.70.150.10">
    <property type="entry name" value="Calcium-transporting ATPase, cytoplasmic transduction domain A"/>
    <property type="match status" value="1"/>
</dbReference>
<dbReference type="Gene3D" id="3.40.50.1000">
    <property type="entry name" value="HAD superfamily/HAD-like"/>
    <property type="match status" value="1"/>
</dbReference>
<dbReference type="HAMAP" id="MF_00285">
    <property type="entry name" value="KdpB"/>
    <property type="match status" value="1"/>
</dbReference>
<dbReference type="InterPro" id="IPR023299">
    <property type="entry name" value="ATPase_P-typ_cyto_dom_N"/>
</dbReference>
<dbReference type="InterPro" id="IPR018303">
    <property type="entry name" value="ATPase_P-typ_P_site"/>
</dbReference>
<dbReference type="InterPro" id="IPR023298">
    <property type="entry name" value="ATPase_P-typ_TM_dom_sf"/>
</dbReference>
<dbReference type="InterPro" id="IPR008250">
    <property type="entry name" value="ATPase_P-typ_transduc_dom_A_sf"/>
</dbReference>
<dbReference type="InterPro" id="IPR036412">
    <property type="entry name" value="HAD-like_sf"/>
</dbReference>
<dbReference type="InterPro" id="IPR023214">
    <property type="entry name" value="HAD_sf"/>
</dbReference>
<dbReference type="InterPro" id="IPR006391">
    <property type="entry name" value="P-type_ATPase_bsu_IA"/>
</dbReference>
<dbReference type="InterPro" id="IPR001757">
    <property type="entry name" value="P_typ_ATPase"/>
</dbReference>
<dbReference type="InterPro" id="IPR044492">
    <property type="entry name" value="P_typ_ATPase_HD_dom"/>
</dbReference>
<dbReference type="NCBIfam" id="TIGR01494">
    <property type="entry name" value="ATPase_P-type"/>
    <property type="match status" value="2"/>
</dbReference>
<dbReference type="NCBIfam" id="TIGR01497">
    <property type="entry name" value="kdpB"/>
    <property type="match status" value="1"/>
</dbReference>
<dbReference type="PANTHER" id="PTHR43743">
    <property type="entry name" value="POTASSIUM-TRANSPORTING ATPASE ATP-BINDING SUBUNIT"/>
    <property type="match status" value="1"/>
</dbReference>
<dbReference type="PANTHER" id="PTHR43743:SF1">
    <property type="entry name" value="POTASSIUM-TRANSPORTING ATPASE ATP-BINDING SUBUNIT"/>
    <property type="match status" value="1"/>
</dbReference>
<dbReference type="Pfam" id="PF00122">
    <property type="entry name" value="E1-E2_ATPase"/>
    <property type="match status" value="1"/>
</dbReference>
<dbReference type="Pfam" id="PF00702">
    <property type="entry name" value="Hydrolase"/>
    <property type="match status" value="1"/>
</dbReference>
<dbReference type="PRINTS" id="PR00119">
    <property type="entry name" value="CATATPASE"/>
</dbReference>
<dbReference type="SFLD" id="SFLDS00003">
    <property type="entry name" value="Haloacid_Dehalogenase"/>
    <property type="match status" value="1"/>
</dbReference>
<dbReference type="SFLD" id="SFLDF00027">
    <property type="entry name" value="p-type_atpase"/>
    <property type="match status" value="1"/>
</dbReference>
<dbReference type="SUPFAM" id="SSF81653">
    <property type="entry name" value="Calcium ATPase, transduction domain A"/>
    <property type="match status" value="1"/>
</dbReference>
<dbReference type="SUPFAM" id="SSF81665">
    <property type="entry name" value="Calcium ATPase, transmembrane domain M"/>
    <property type="match status" value="1"/>
</dbReference>
<dbReference type="SUPFAM" id="SSF56784">
    <property type="entry name" value="HAD-like"/>
    <property type="match status" value="1"/>
</dbReference>
<dbReference type="PROSITE" id="PS00154">
    <property type="entry name" value="ATPASE_E1_E2"/>
    <property type="match status" value="1"/>
</dbReference>
<accession>Q8YPE9</accession>
<organism>
    <name type="scientific">Nostoc sp. (strain PCC 7120 / SAG 25.82 / UTEX 2576)</name>
    <dbReference type="NCBI Taxonomy" id="103690"/>
    <lineage>
        <taxon>Bacteria</taxon>
        <taxon>Bacillati</taxon>
        <taxon>Cyanobacteriota</taxon>
        <taxon>Cyanophyceae</taxon>
        <taxon>Nostocales</taxon>
        <taxon>Nostocaceae</taxon>
        <taxon>Nostoc</taxon>
    </lineage>
</organism>